<feature type="chain" id="PRO_1000001274" description="LexA repressor">
    <location>
        <begin position="1"/>
        <end position="215"/>
    </location>
</feature>
<feature type="DNA-binding region" description="H-T-H motif" evidence="1">
    <location>
        <begin position="28"/>
        <end position="48"/>
    </location>
</feature>
<feature type="active site" description="For autocatalytic cleavage activity" evidence="1">
    <location>
        <position position="133"/>
    </location>
</feature>
<feature type="active site" description="For autocatalytic cleavage activity" evidence="1">
    <location>
        <position position="170"/>
    </location>
</feature>
<feature type="site" description="Cleavage; by autolysis" evidence="1">
    <location>
        <begin position="98"/>
        <end position="99"/>
    </location>
</feature>
<protein>
    <recommendedName>
        <fullName evidence="1">LexA repressor</fullName>
        <ecNumber evidence="1">3.4.21.88</ecNumber>
    </recommendedName>
</protein>
<comment type="function">
    <text evidence="1">Represses a number of genes involved in the response to DNA damage (SOS response), including recA and lexA. In the presence of single-stranded DNA, RecA interacts with LexA causing an autocatalytic cleavage which disrupts the DNA-binding part of LexA, leading to derepression of the SOS regulon and eventually DNA repair.</text>
</comment>
<comment type="catalytic activity">
    <reaction evidence="1">
        <text>Hydrolysis of Ala-|-Gly bond in repressor LexA.</text>
        <dbReference type="EC" id="3.4.21.88"/>
    </reaction>
</comment>
<comment type="subunit">
    <text evidence="1">Homodimer.</text>
</comment>
<comment type="similarity">
    <text evidence="1">Belongs to the peptidase S24 family.</text>
</comment>
<name>LEXA_BURVG</name>
<sequence length="215" mass="23254">MTKLTARQQQVFDLIRRAIERSGFPPTRAEIAAELGFSSPNAAEEHLRALARKGVIELAAGASRGIRLLGIDDMPHQFTLPHAGLMQLSLPLVGRVAAGSPILAQEHISQHYACDPALFTSKPDYLLKVRGLSMRDAGILDGDLLAVQKRTEAKDGQIIVARLGDDVTVKRLMRRPGGIELIAENPDYENIFVKAGSAEFALEGIAVGLIRSGEL</sequence>
<proteinExistence type="inferred from homology"/>
<dbReference type="EC" id="3.4.21.88" evidence="1"/>
<dbReference type="EMBL" id="CP000614">
    <property type="protein sequence ID" value="ABO54559.1"/>
    <property type="molecule type" value="Genomic_DNA"/>
</dbReference>
<dbReference type="SMR" id="A4JE56"/>
<dbReference type="MEROPS" id="S24.001"/>
<dbReference type="KEGG" id="bvi:Bcep1808_1552"/>
<dbReference type="eggNOG" id="COG1974">
    <property type="taxonomic scope" value="Bacteria"/>
</dbReference>
<dbReference type="HOGENOM" id="CLU_066192_45_3_4"/>
<dbReference type="Proteomes" id="UP000002287">
    <property type="component" value="Chromosome 1"/>
</dbReference>
<dbReference type="GO" id="GO:0003677">
    <property type="term" value="F:DNA binding"/>
    <property type="evidence" value="ECO:0007669"/>
    <property type="project" value="UniProtKB-UniRule"/>
</dbReference>
<dbReference type="GO" id="GO:0004252">
    <property type="term" value="F:serine-type endopeptidase activity"/>
    <property type="evidence" value="ECO:0007669"/>
    <property type="project" value="UniProtKB-UniRule"/>
</dbReference>
<dbReference type="GO" id="GO:0006281">
    <property type="term" value="P:DNA repair"/>
    <property type="evidence" value="ECO:0007669"/>
    <property type="project" value="UniProtKB-UniRule"/>
</dbReference>
<dbReference type="GO" id="GO:0006260">
    <property type="term" value="P:DNA replication"/>
    <property type="evidence" value="ECO:0007669"/>
    <property type="project" value="UniProtKB-UniRule"/>
</dbReference>
<dbReference type="GO" id="GO:0045892">
    <property type="term" value="P:negative regulation of DNA-templated transcription"/>
    <property type="evidence" value="ECO:0007669"/>
    <property type="project" value="UniProtKB-UniRule"/>
</dbReference>
<dbReference type="GO" id="GO:0006508">
    <property type="term" value="P:proteolysis"/>
    <property type="evidence" value="ECO:0007669"/>
    <property type="project" value="InterPro"/>
</dbReference>
<dbReference type="GO" id="GO:0009432">
    <property type="term" value="P:SOS response"/>
    <property type="evidence" value="ECO:0007669"/>
    <property type="project" value="UniProtKB-UniRule"/>
</dbReference>
<dbReference type="CDD" id="cd06529">
    <property type="entry name" value="S24_LexA-like"/>
    <property type="match status" value="1"/>
</dbReference>
<dbReference type="FunFam" id="1.10.10.10:FF:000009">
    <property type="entry name" value="LexA repressor"/>
    <property type="match status" value="1"/>
</dbReference>
<dbReference type="FunFam" id="2.10.109.10:FF:000001">
    <property type="entry name" value="LexA repressor"/>
    <property type="match status" value="1"/>
</dbReference>
<dbReference type="Gene3D" id="2.10.109.10">
    <property type="entry name" value="Umud Fragment, subunit A"/>
    <property type="match status" value="1"/>
</dbReference>
<dbReference type="Gene3D" id="1.10.10.10">
    <property type="entry name" value="Winged helix-like DNA-binding domain superfamily/Winged helix DNA-binding domain"/>
    <property type="match status" value="1"/>
</dbReference>
<dbReference type="HAMAP" id="MF_00015">
    <property type="entry name" value="LexA"/>
    <property type="match status" value="1"/>
</dbReference>
<dbReference type="InterPro" id="IPR006200">
    <property type="entry name" value="LexA"/>
</dbReference>
<dbReference type="InterPro" id="IPR039418">
    <property type="entry name" value="LexA-like"/>
</dbReference>
<dbReference type="InterPro" id="IPR036286">
    <property type="entry name" value="LexA/Signal_pep-like_sf"/>
</dbReference>
<dbReference type="InterPro" id="IPR006199">
    <property type="entry name" value="LexA_DNA-bd_dom"/>
</dbReference>
<dbReference type="InterPro" id="IPR050077">
    <property type="entry name" value="LexA_repressor"/>
</dbReference>
<dbReference type="InterPro" id="IPR006197">
    <property type="entry name" value="Peptidase_S24_LexA"/>
</dbReference>
<dbReference type="InterPro" id="IPR015927">
    <property type="entry name" value="Peptidase_S24_S26A/B/C"/>
</dbReference>
<dbReference type="InterPro" id="IPR036388">
    <property type="entry name" value="WH-like_DNA-bd_sf"/>
</dbReference>
<dbReference type="InterPro" id="IPR036390">
    <property type="entry name" value="WH_DNA-bd_sf"/>
</dbReference>
<dbReference type="NCBIfam" id="TIGR00498">
    <property type="entry name" value="lexA"/>
    <property type="match status" value="1"/>
</dbReference>
<dbReference type="PANTHER" id="PTHR33516">
    <property type="entry name" value="LEXA REPRESSOR"/>
    <property type="match status" value="1"/>
</dbReference>
<dbReference type="PANTHER" id="PTHR33516:SF2">
    <property type="entry name" value="LEXA REPRESSOR-RELATED"/>
    <property type="match status" value="1"/>
</dbReference>
<dbReference type="Pfam" id="PF01726">
    <property type="entry name" value="LexA_DNA_bind"/>
    <property type="match status" value="1"/>
</dbReference>
<dbReference type="Pfam" id="PF00717">
    <property type="entry name" value="Peptidase_S24"/>
    <property type="match status" value="1"/>
</dbReference>
<dbReference type="PRINTS" id="PR00726">
    <property type="entry name" value="LEXASERPTASE"/>
</dbReference>
<dbReference type="SUPFAM" id="SSF51306">
    <property type="entry name" value="LexA/Signal peptidase"/>
    <property type="match status" value="1"/>
</dbReference>
<dbReference type="SUPFAM" id="SSF46785">
    <property type="entry name" value="Winged helix' DNA-binding domain"/>
    <property type="match status" value="1"/>
</dbReference>
<keyword id="KW-0068">Autocatalytic cleavage</keyword>
<keyword id="KW-0227">DNA damage</keyword>
<keyword id="KW-0234">DNA repair</keyword>
<keyword id="KW-0235">DNA replication</keyword>
<keyword id="KW-0238">DNA-binding</keyword>
<keyword id="KW-0378">Hydrolase</keyword>
<keyword id="KW-0678">Repressor</keyword>
<keyword id="KW-0742">SOS response</keyword>
<keyword id="KW-0804">Transcription</keyword>
<keyword id="KW-0805">Transcription regulation</keyword>
<gene>
    <name evidence="1" type="primary">lexA</name>
    <name type="ordered locus">Bcep1808_1552</name>
</gene>
<evidence type="ECO:0000255" key="1">
    <source>
        <dbReference type="HAMAP-Rule" id="MF_00015"/>
    </source>
</evidence>
<organism>
    <name type="scientific">Burkholderia vietnamiensis (strain G4 / LMG 22486)</name>
    <name type="common">Burkholderia cepacia (strain R1808)</name>
    <dbReference type="NCBI Taxonomy" id="269482"/>
    <lineage>
        <taxon>Bacteria</taxon>
        <taxon>Pseudomonadati</taxon>
        <taxon>Pseudomonadota</taxon>
        <taxon>Betaproteobacteria</taxon>
        <taxon>Burkholderiales</taxon>
        <taxon>Burkholderiaceae</taxon>
        <taxon>Burkholderia</taxon>
        <taxon>Burkholderia cepacia complex</taxon>
    </lineage>
</organism>
<accession>A4JE56</accession>
<reference key="1">
    <citation type="submission" date="2007-03" db="EMBL/GenBank/DDBJ databases">
        <title>Complete sequence of chromosome 1 of Burkholderia vietnamiensis G4.</title>
        <authorList>
            <consortium name="US DOE Joint Genome Institute"/>
            <person name="Copeland A."/>
            <person name="Lucas S."/>
            <person name="Lapidus A."/>
            <person name="Barry K."/>
            <person name="Detter J.C."/>
            <person name="Glavina del Rio T."/>
            <person name="Hammon N."/>
            <person name="Israni S."/>
            <person name="Dalin E."/>
            <person name="Tice H."/>
            <person name="Pitluck S."/>
            <person name="Chain P."/>
            <person name="Malfatti S."/>
            <person name="Shin M."/>
            <person name="Vergez L."/>
            <person name="Schmutz J."/>
            <person name="Larimer F."/>
            <person name="Land M."/>
            <person name="Hauser L."/>
            <person name="Kyrpides N."/>
            <person name="Tiedje J."/>
            <person name="Richardson P."/>
        </authorList>
    </citation>
    <scope>NUCLEOTIDE SEQUENCE [LARGE SCALE GENOMIC DNA]</scope>
    <source>
        <strain>G4 / LMG 22486</strain>
    </source>
</reference>